<feature type="chain" id="PRO_0000097533" description="AP-4 complex accessory subunit RUSC1">
    <location>
        <begin position="1"/>
        <end position="893"/>
    </location>
</feature>
<feature type="domain" description="RUN" evidence="2">
    <location>
        <begin position="515"/>
        <end position="659"/>
    </location>
</feature>
<feature type="domain" description="SH3" evidence="3">
    <location>
        <begin position="835"/>
        <end position="893"/>
    </location>
</feature>
<feature type="region of interest" description="Disordered" evidence="4">
    <location>
        <begin position="31"/>
        <end position="223"/>
    </location>
</feature>
<feature type="region of interest" description="Disordered" evidence="4">
    <location>
        <begin position="237"/>
        <end position="332"/>
    </location>
</feature>
<feature type="region of interest" description="Disordered" evidence="4">
    <location>
        <begin position="339"/>
        <end position="358"/>
    </location>
</feature>
<feature type="region of interest" description="Disordered" evidence="4">
    <location>
        <begin position="366"/>
        <end position="444"/>
    </location>
</feature>
<feature type="region of interest" description="Interaction with TRAF6" evidence="1">
    <location>
        <begin position="463"/>
        <end position="598"/>
    </location>
</feature>
<feature type="region of interest" description="Interaction with IKBKG" evidence="1">
    <location>
        <begin position="599"/>
        <end position="665"/>
    </location>
</feature>
<feature type="region of interest" description="Disordered" evidence="4">
    <location>
        <begin position="700"/>
        <end position="721"/>
    </location>
</feature>
<feature type="region of interest" description="Disordered" evidence="4">
    <location>
        <begin position="751"/>
        <end position="772"/>
    </location>
</feature>
<feature type="compositionally biased region" description="Polar residues" evidence="4">
    <location>
        <begin position="77"/>
        <end position="87"/>
    </location>
</feature>
<feature type="compositionally biased region" description="Low complexity" evidence="4">
    <location>
        <begin position="95"/>
        <end position="117"/>
    </location>
</feature>
<feature type="compositionally biased region" description="Low complexity" evidence="4">
    <location>
        <begin position="149"/>
        <end position="165"/>
    </location>
</feature>
<feature type="compositionally biased region" description="Polar residues" evidence="4">
    <location>
        <begin position="177"/>
        <end position="187"/>
    </location>
</feature>
<feature type="compositionally biased region" description="Basic and acidic residues" evidence="4">
    <location>
        <begin position="237"/>
        <end position="257"/>
    </location>
</feature>
<feature type="compositionally biased region" description="Pro residues" evidence="4">
    <location>
        <begin position="373"/>
        <end position="382"/>
    </location>
</feature>
<feature type="compositionally biased region" description="Pro residues" evidence="4">
    <location>
        <begin position="390"/>
        <end position="399"/>
    </location>
</feature>
<feature type="compositionally biased region" description="Low complexity" evidence="4">
    <location>
        <begin position="702"/>
        <end position="714"/>
    </location>
</feature>
<feature type="compositionally biased region" description="Low complexity" evidence="4">
    <location>
        <begin position="754"/>
        <end position="770"/>
    </location>
</feature>
<feature type="splice variant" id="VSP_010856" description="In isoform 2." evidence="6">
    <location>
        <begin position="1"/>
        <end position="462"/>
    </location>
</feature>
<feature type="splice variant" id="VSP_010857" description="In isoform 3." evidence="7">
    <original>VV</original>
    <variation>VAGPSLFPRPPVFRFSADGRPLLEGGGAGAPGSLLFTPLTGWSNSRLRLLGAASPPEEQLLPVRLSPVGAYSPPTRGALPCLASPELALLLSPLFPRSSTFPAAAPLPRQVPAPPLPTPPCPPTAPRWTRRPPPPPRQL</variation>
    <location>
        <begin position="445"/>
        <end position="446"/>
    </location>
</feature>
<feature type="sequence conflict" description="In Ref. 1; BAC27820." evidence="9" ref="1">
    <original>P</original>
    <variation>Q</variation>
    <location>
        <position position="345"/>
    </location>
</feature>
<proteinExistence type="evidence at protein level"/>
<keyword id="KW-0025">Alternative splicing</keyword>
<keyword id="KW-0963">Cytoplasm</keyword>
<keyword id="KW-0968">Cytoplasmic vesicle</keyword>
<keyword id="KW-0206">Cytoskeleton</keyword>
<keyword id="KW-0967">Endosome</keyword>
<keyword id="KW-0333">Golgi apparatus</keyword>
<keyword id="KW-0493">Microtubule</keyword>
<keyword id="KW-0539">Nucleus</keyword>
<keyword id="KW-0597">Phosphoprotein</keyword>
<keyword id="KW-1185">Reference proteome</keyword>
<keyword id="KW-0728">SH3 domain</keyword>
<keyword id="KW-0770">Synapse</keyword>
<keyword id="KW-0832">Ubl conjugation</keyword>
<accession>Q8BG26</accession>
<accession>Q6PHT9</accession>
<comment type="function">
    <text evidence="1 5">Associates with the adapter-like complex 4 (AP-4) and may therefore play a role in vesicular trafficking of proteins at the trans-Golgi network. Signaling adapter which plays a role in neuronal differentiation. Involved in regulation of NGF-dependent neurite outgrowth (By similarity). May play a role in neuronal vesicular trafficking, specifically involving pre-synaptic membrane proteins (PubMed:22404429). Seems to be involved in signaling pathways that are regulated by the prolonged activation of MAPK. Can regulate the polyubiquitination of IKBKG and thus may be involved in regulation of the NF-kappa-B pathway (By similarity).</text>
</comment>
<comment type="subunit">
    <text evidence="1 5">Associated component of the adapter-like complex 4 (AP-4) (By similarity). Interacts with IKBKG and TRAF6 (By similarity). Interacts with F-actin, acetylated actin, TUBB3, STX1A, KIF5B and KLC1 (PubMed:22404429).</text>
</comment>
<comment type="subcellular location">
    <subcellularLocation>
        <location evidence="5">Cytoplasm</location>
    </subcellularLocation>
    <subcellularLocation>
        <location evidence="1">Nucleus</location>
    </subcellularLocation>
    <subcellularLocation>
        <location evidence="5">Cytoplasm</location>
        <location evidence="5">Cytoskeleton</location>
    </subcellularLocation>
    <subcellularLocation>
        <location evidence="10">Cytoplasmic vesicle</location>
    </subcellularLocation>
    <subcellularLocation>
        <location evidence="10">Early endosome</location>
    </subcellularLocation>
    <subcellularLocation>
        <location evidence="5">Postsynaptic density</location>
    </subcellularLocation>
    <subcellularLocation>
        <location evidence="10">Golgi apparatus</location>
    </subcellularLocation>
    <text evidence="1 5">Translocated to the nuclear envelope upon stimulation with NGF (By similarity). Associated with membranes and microtubules (PubMed:22404429).</text>
</comment>
<comment type="alternative products">
    <event type="alternative splicing"/>
    <isoform>
        <id>Q8BG26-1</id>
        <name>1</name>
        <sequence type="displayed"/>
    </isoform>
    <isoform>
        <id>Q8BG26-2</id>
        <name>2</name>
        <sequence type="described" ref="VSP_010856"/>
    </isoform>
    <isoform>
        <id>Q8BG26-3</id>
        <name>3</name>
        <sequence type="described" ref="VSP_010857"/>
    </isoform>
</comment>
<comment type="tissue specificity">
    <text evidence="5">Expressed in brain, brain stem and spinal cord (at protein level).</text>
</comment>
<comment type="developmental stage">
    <text evidence="5">Expressed at 15 dpc in hippocampal, cortical and cerebellar brain, and brain stem and spinal cord. At 18 dpc, expression strongly overlaps with TUBB3 expression in post-mitotic neurons throughout the entire brain. Expression levels increase to 18 dpc/P1 after which the levels decline in the hippocampus, cerebellum and brain stem and spinal cord into adulthood while remaining high in the cortex.</text>
</comment>
<comment type="domain">
    <text evidence="1">The RUN domain is necessary for NGF induced nuclear redistribution.</text>
</comment>
<comment type="PTM">
    <text evidence="1">Phosphorylated on serine residues following nuclear translocation.</text>
</comment>
<comment type="PTM">
    <text evidence="1">Polyubiquitinated; polyubiquitination involves TRAF6.</text>
</comment>
<comment type="sequence caution" evidence="9">
    <conflict type="erroneous initiation">
        <sequence resource="EMBL-CDS" id="BAC27820"/>
    </conflict>
</comment>
<comment type="sequence caution" evidence="9">
    <conflict type="erroneous initiation">
        <sequence resource="EMBL-CDS" id="BAC30411"/>
    </conflict>
</comment>
<comment type="sequence caution" evidence="9">
    <conflict type="erroneous termination">
        <sequence resource="EMBL-CDS" id="BAC31333"/>
    </conflict>
    <text>Truncated C-terminus.</text>
</comment>
<name>RUSC1_MOUSE</name>
<gene>
    <name evidence="11" type="primary">Rusc1</name>
    <name evidence="8" type="synonym">Nesca</name>
</gene>
<organism>
    <name type="scientific">Mus musculus</name>
    <name type="common">Mouse</name>
    <dbReference type="NCBI Taxonomy" id="10090"/>
    <lineage>
        <taxon>Eukaryota</taxon>
        <taxon>Metazoa</taxon>
        <taxon>Chordata</taxon>
        <taxon>Craniata</taxon>
        <taxon>Vertebrata</taxon>
        <taxon>Euteleostomi</taxon>
        <taxon>Mammalia</taxon>
        <taxon>Eutheria</taxon>
        <taxon>Euarchontoglires</taxon>
        <taxon>Glires</taxon>
        <taxon>Rodentia</taxon>
        <taxon>Myomorpha</taxon>
        <taxon>Muroidea</taxon>
        <taxon>Muridae</taxon>
        <taxon>Murinae</taxon>
        <taxon>Mus</taxon>
        <taxon>Mus</taxon>
    </lineage>
</organism>
<sequence>MLSPQRALLCNLNHIHLQHVSLGLHLSRRPELREGPLSTPPPPGDTGGKESRGPCSGTLVDANSNSPAVPCRCCQEHGSSIENQQDPSQEEEAVSPSDPGCSSSLSSCSDLSPDESPVSVYSRDLPGNEDANPQPSTLELGSPLAPAGPSTCSPDSFCCSPDSCSGISSPPGPDLDSNCNALTTCQDLPSPGLEEEEDSGEQDLATSELSETEDGRIDAGKAEPSWKINPIWKIDTEKTEAGWKTIEDSDSGRKTDENTNSSLKTESGKLASCLNTNSGSKIDAGKTDGGWRGDVSQEPVPHRTITSFHELAQKRKRGPGLPLVPQAKKDRSDWLIVFSPDTELPPTGSLGGSLAPPREVTTFKELRSRSRAQPPPVPPRDPPAGWALVPPRPPPPPVPPRRKKNRLGLQPIAEGLSEEGRAASPRAGEEASASQEPEEPRAHAVVRSSWSFAGVPGAQRLWMAEAQSGTGQLQEQKKGLLIAVSASVDKIISHFGAARNLVQKAQLGDSRLSPDVGHLVLTTLCPALHALVADGLKPFRKDLITGQRRSSPWSVVEASVKPGSCTHSMGSLYSQVSRLAPLSSSRSRFHAFILGLLNTKQLELWFSSLQEDAGLLSLLYLPTGFFSLARGSCPSLATELLLLLQPLSVLTFHLDLLFEHHHHLPVGLQQAPAPSCPPPALQQTMQAVLHWGERLAQSLRGTSGESTTDSSTPSARPPAGSWWDQLTQASRVYASGGTEGFPLLRWGPRRHGTTAEAAQEAPPPTEQTTPGRSVWLGRLFGVPGCPSETESGAFKSRRPSSWLPPTVSVLALVKRGTPPETPPEALVSSPGSVVQADRAVRALCDHTAAGPDQLSFQRGELLRVIATVDEDWLRCGRDGVEGLVPVGYTSLVL</sequence>
<protein>
    <recommendedName>
        <fullName evidence="9">AP-4 complex accessory subunit RUSC1</fullName>
    </recommendedName>
    <alternativeName>
        <fullName evidence="8">New molecule containing SH3 at the carboxy-terminus</fullName>
        <shortName evidence="8">Nesca</shortName>
    </alternativeName>
    <alternativeName>
        <fullName>RUN and SH3 domain-containing protein 1</fullName>
    </alternativeName>
</protein>
<dbReference type="EMBL" id="AK032334">
    <property type="protein sequence ID" value="BAC27820.1"/>
    <property type="status" value="ALT_INIT"/>
    <property type="molecule type" value="mRNA"/>
</dbReference>
<dbReference type="EMBL" id="AK039664">
    <property type="protein sequence ID" value="BAC30411.1"/>
    <property type="status" value="ALT_INIT"/>
    <property type="molecule type" value="mRNA"/>
</dbReference>
<dbReference type="EMBL" id="AK042689">
    <property type="protein sequence ID" value="BAC31333.1"/>
    <property type="status" value="ALT_SEQ"/>
    <property type="molecule type" value="mRNA"/>
</dbReference>
<dbReference type="EMBL" id="BC056360">
    <property type="protein sequence ID" value="AAH56360.1"/>
    <property type="molecule type" value="mRNA"/>
</dbReference>
<dbReference type="EMBL" id="BC057034">
    <property type="protein sequence ID" value="AAH57034.1"/>
    <property type="molecule type" value="mRNA"/>
</dbReference>
<dbReference type="CCDS" id="CCDS38485.1">
    <molecule id="Q8BG26-1"/>
</dbReference>
<dbReference type="CCDS" id="CCDS38486.1">
    <molecule id="Q8BG26-3"/>
</dbReference>
<dbReference type="CCDS" id="CCDS50956.1">
    <molecule id="Q8BG26-2"/>
</dbReference>
<dbReference type="RefSeq" id="NP_001077276.1">
    <molecule id="Q8BG26-1"/>
    <property type="nucleotide sequence ID" value="NM_001083807.2"/>
</dbReference>
<dbReference type="RefSeq" id="NP_001077277.1">
    <molecule id="Q8BG26-2"/>
    <property type="nucleotide sequence ID" value="NM_001083808.2"/>
</dbReference>
<dbReference type="RefSeq" id="NP_001416088.1">
    <molecule id="Q8BG26-2"/>
    <property type="nucleotide sequence ID" value="NM_001429159.1"/>
</dbReference>
<dbReference type="RefSeq" id="NP_082464.2">
    <molecule id="Q8BG26-3"/>
    <property type="nucleotide sequence ID" value="NM_028188.3"/>
</dbReference>
<dbReference type="RefSeq" id="XP_006502197.1">
    <property type="nucleotide sequence ID" value="XM_006502134.3"/>
</dbReference>
<dbReference type="SMR" id="Q8BG26"/>
<dbReference type="BioGRID" id="215288">
    <property type="interactions" value="1"/>
</dbReference>
<dbReference type="FunCoup" id="Q8BG26">
    <property type="interactions" value="554"/>
</dbReference>
<dbReference type="IntAct" id="Q8BG26">
    <property type="interactions" value="5"/>
</dbReference>
<dbReference type="STRING" id="10090.ENSMUSP00000088447"/>
<dbReference type="GlyGen" id="Q8BG26">
    <property type="glycosylation" value="2 sites, 1 N-linked glycan (1 site)"/>
</dbReference>
<dbReference type="iPTMnet" id="Q8BG26"/>
<dbReference type="PhosphoSitePlus" id="Q8BG26"/>
<dbReference type="jPOST" id="Q8BG26"/>
<dbReference type="ProteomicsDB" id="262727">
    <molecule id="Q8BG26-1"/>
</dbReference>
<dbReference type="ProteomicsDB" id="262728">
    <molecule id="Q8BG26-2"/>
</dbReference>
<dbReference type="ProteomicsDB" id="262729">
    <molecule id="Q8BG26-3"/>
</dbReference>
<dbReference type="Antibodypedia" id="34192">
    <property type="antibodies" value="117 antibodies from 23 providers"/>
</dbReference>
<dbReference type="Ensembl" id="ENSMUST00000052539.13">
    <molecule id="Q8BG26-1"/>
    <property type="protein sequence ID" value="ENSMUSP00000056640.7"/>
    <property type="gene ID" value="ENSMUSG00000041263.15"/>
</dbReference>
<dbReference type="Ensembl" id="ENSMUST00000090929.12">
    <molecule id="Q8BG26-3"/>
    <property type="protein sequence ID" value="ENSMUSP00000088447.6"/>
    <property type="gene ID" value="ENSMUSG00000041263.15"/>
</dbReference>
<dbReference type="Ensembl" id="ENSMUST00000166687.6">
    <molecule id="Q8BG26-2"/>
    <property type="protein sequence ID" value="ENSMUSP00000130477.2"/>
    <property type="gene ID" value="ENSMUSG00000041263.15"/>
</dbReference>
<dbReference type="GeneID" id="72296"/>
<dbReference type="KEGG" id="mmu:72296"/>
<dbReference type="UCSC" id="uc008pxm.1">
    <molecule id="Q8BG26-3"/>
    <property type="organism name" value="mouse"/>
</dbReference>
<dbReference type="UCSC" id="uc008pxn.1">
    <molecule id="Q8BG26-1"/>
    <property type="organism name" value="mouse"/>
</dbReference>
<dbReference type="AGR" id="MGI:1919546"/>
<dbReference type="CTD" id="23623"/>
<dbReference type="MGI" id="MGI:1919546">
    <property type="gene designation" value="Rusc1"/>
</dbReference>
<dbReference type="VEuPathDB" id="HostDB:ENSMUSG00000041263"/>
<dbReference type="eggNOG" id="ENOG502QWTC">
    <property type="taxonomic scope" value="Eukaryota"/>
</dbReference>
<dbReference type="GeneTree" id="ENSGT00900000141033"/>
<dbReference type="HOGENOM" id="CLU_017252_0_0_1"/>
<dbReference type="InParanoid" id="Q8BG26"/>
<dbReference type="OMA" id="AQEDFPC"/>
<dbReference type="OrthoDB" id="87925at9989"/>
<dbReference type="PhylomeDB" id="Q8BG26"/>
<dbReference type="TreeFam" id="TF332235"/>
<dbReference type="BioGRID-ORCS" id="72296">
    <property type="hits" value="6 hits in 76 CRISPR screens"/>
</dbReference>
<dbReference type="ChiTaRS" id="Rusc1">
    <property type="organism name" value="mouse"/>
</dbReference>
<dbReference type="PRO" id="PR:Q8BG26"/>
<dbReference type="Proteomes" id="UP000000589">
    <property type="component" value="Chromosome 3"/>
</dbReference>
<dbReference type="RNAct" id="Q8BG26">
    <property type="molecule type" value="protein"/>
</dbReference>
<dbReference type="Bgee" id="ENSMUSG00000041263">
    <property type="expression patterns" value="Expressed in motor neuron and 260 other cell types or tissues"/>
</dbReference>
<dbReference type="ExpressionAtlas" id="Q8BG26">
    <property type="expression patterns" value="baseline and differential"/>
</dbReference>
<dbReference type="GO" id="GO:0031410">
    <property type="term" value="C:cytoplasmic vesicle"/>
    <property type="evidence" value="ECO:0000314"/>
    <property type="project" value="UniProtKB"/>
</dbReference>
<dbReference type="GO" id="GO:0005829">
    <property type="term" value="C:cytosol"/>
    <property type="evidence" value="ECO:0007669"/>
    <property type="project" value="Ensembl"/>
</dbReference>
<dbReference type="GO" id="GO:0005769">
    <property type="term" value="C:early endosome"/>
    <property type="evidence" value="ECO:0000314"/>
    <property type="project" value="UniProtKB"/>
</dbReference>
<dbReference type="GO" id="GO:0005794">
    <property type="term" value="C:Golgi apparatus"/>
    <property type="evidence" value="ECO:0000314"/>
    <property type="project" value="UniProtKB"/>
</dbReference>
<dbReference type="GO" id="GO:0005874">
    <property type="term" value="C:microtubule"/>
    <property type="evidence" value="ECO:0007669"/>
    <property type="project" value="UniProtKB-KW"/>
</dbReference>
<dbReference type="GO" id="GO:0015630">
    <property type="term" value="C:microtubule cytoskeleton"/>
    <property type="evidence" value="ECO:0000314"/>
    <property type="project" value="UniProtKB"/>
</dbReference>
<dbReference type="GO" id="GO:0005634">
    <property type="term" value="C:nucleus"/>
    <property type="evidence" value="ECO:0007669"/>
    <property type="project" value="UniProtKB-SubCell"/>
</dbReference>
<dbReference type="GO" id="GO:0014069">
    <property type="term" value="C:postsynaptic density"/>
    <property type="evidence" value="ECO:0007669"/>
    <property type="project" value="UniProtKB-SubCell"/>
</dbReference>
<dbReference type="GO" id="GO:0003779">
    <property type="term" value="F:actin binding"/>
    <property type="evidence" value="ECO:0000314"/>
    <property type="project" value="UniProtKB"/>
</dbReference>
<dbReference type="GO" id="GO:0000209">
    <property type="term" value="P:protein polyubiquitination"/>
    <property type="evidence" value="ECO:0000250"/>
    <property type="project" value="UniProtKB"/>
</dbReference>
<dbReference type="CDD" id="cd17701">
    <property type="entry name" value="RUN_RUSC1"/>
    <property type="match status" value="1"/>
</dbReference>
<dbReference type="FunFam" id="1.20.58.900:FF:000006">
    <property type="entry name" value="RUN and SH3 domain containing 1"/>
    <property type="match status" value="1"/>
</dbReference>
<dbReference type="Gene3D" id="1.20.58.900">
    <property type="match status" value="1"/>
</dbReference>
<dbReference type="Gene3D" id="2.30.30.40">
    <property type="entry name" value="SH3 Domains"/>
    <property type="match status" value="1"/>
</dbReference>
<dbReference type="InterPro" id="IPR004012">
    <property type="entry name" value="Run_dom"/>
</dbReference>
<dbReference type="InterPro" id="IPR037213">
    <property type="entry name" value="Run_dom_sf"/>
</dbReference>
<dbReference type="InterPro" id="IPR047341">
    <property type="entry name" value="RUN_RUSC1"/>
</dbReference>
<dbReference type="InterPro" id="IPR047343">
    <property type="entry name" value="RUSC1_2"/>
</dbReference>
<dbReference type="InterPro" id="IPR036028">
    <property type="entry name" value="SH3-like_dom_sf"/>
</dbReference>
<dbReference type="InterPro" id="IPR001452">
    <property type="entry name" value="SH3_domain"/>
</dbReference>
<dbReference type="PANTHER" id="PTHR15591:SF11">
    <property type="entry name" value="AP-4 COMPLEX ACCESSORY SUBUNIT RUSC1"/>
    <property type="match status" value="1"/>
</dbReference>
<dbReference type="PANTHER" id="PTHR15591">
    <property type="entry name" value="RUN AND SH3 DOMAIN CONTAINING"/>
    <property type="match status" value="1"/>
</dbReference>
<dbReference type="Pfam" id="PF02759">
    <property type="entry name" value="RUN"/>
    <property type="match status" value="1"/>
</dbReference>
<dbReference type="Pfam" id="PF14604">
    <property type="entry name" value="SH3_9"/>
    <property type="match status" value="1"/>
</dbReference>
<dbReference type="SMART" id="SM00593">
    <property type="entry name" value="RUN"/>
    <property type="match status" value="1"/>
</dbReference>
<dbReference type="SMART" id="SM00326">
    <property type="entry name" value="SH3"/>
    <property type="match status" value="1"/>
</dbReference>
<dbReference type="SUPFAM" id="SSF140741">
    <property type="entry name" value="RUN domain-like"/>
    <property type="match status" value="1"/>
</dbReference>
<dbReference type="SUPFAM" id="SSF50044">
    <property type="entry name" value="SH3-domain"/>
    <property type="match status" value="1"/>
</dbReference>
<dbReference type="PROSITE" id="PS50826">
    <property type="entry name" value="RUN"/>
    <property type="match status" value="1"/>
</dbReference>
<dbReference type="PROSITE" id="PS50002">
    <property type="entry name" value="SH3"/>
    <property type="match status" value="1"/>
</dbReference>
<evidence type="ECO:0000250" key="1">
    <source>
        <dbReference type="UniProtKB" id="Q9BVN2"/>
    </source>
</evidence>
<evidence type="ECO:0000255" key="2">
    <source>
        <dbReference type="PROSITE-ProRule" id="PRU00178"/>
    </source>
</evidence>
<evidence type="ECO:0000255" key="3">
    <source>
        <dbReference type="PROSITE-ProRule" id="PRU00192"/>
    </source>
</evidence>
<evidence type="ECO:0000256" key="4">
    <source>
        <dbReference type="SAM" id="MobiDB-lite"/>
    </source>
</evidence>
<evidence type="ECO:0000269" key="5">
    <source>
    </source>
</evidence>
<evidence type="ECO:0000303" key="6">
    <source>
    </source>
</evidence>
<evidence type="ECO:0000303" key="7">
    <source>
    </source>
</evidence>
<evidence type="ECO:0000303" key="8">
    <source>
    </source>
</evidence>
<evidence type="ECO:0000305" key="9"/>
<evidence type="ECO:0000305" key="10">
    <source>
    </source>
</evidence>
<evidence type="ECO:0000312" key="11">
    <source>
        <dbReference type="MGI" id="MGI:1919546"/>
    </source>
</evidence>
<reference key="1">
    <citation type="journal article" date="2005" name="Science">
        <title>The transcriptional landscape of the mammalian genome.</title>
        <authorList>
            <person name="Carninci P."/>
            <person name="Kasukawa T."/>
            <person name="Katayama S."/>
            <person name="Gough J."/>
            <person name="Frith M.C."/>
            <person name="Maeda N."/>
            <person name="Oyama R."/>
            <person name="Ravasi T."/>
            <person name="Lenhard B."/>
            <person name="Wells C."/>
            <person name="Kodzius R."/>
            <person name="Shimokawa K."/>
            <person name="Bajic V.B."/>
            <person name="Brenner S.E."/>
            <person name="Batalov S."/>
            <person name="Forrest A.R."/>
            <person name="Zavolan M."/>
            <person name="Davis M.J."/>
            <person name="Wilming L.G."/>
            <person name="Aidinis V."/>
            <person name="Allen J.E."/>
            <person name="Ambesi-Impiombato A."/>
            <person name="Apweiler R."/>
            <person name="Aturaliya R.N."/>
            <person name="Bailey T.L."/>
            <person name="Bansal M."/>
            <person name="Baxter L."/>
            <person name="Beisel K.W."/>
            <person name="Bersano T."/>
            <person name="Bono H."/>
            <person name="Chalk A.M."/>
            <person name="Chiu K.P."/>
            <person name="Choudhary V."/>
            <person name="Christoffels A."/>
            <person name="Clutterbuck D.R."/>
            <person name="Crowe M.L."/>
            <person name="Dalla E."/>
            <person name="Dalrymple B.P."/>
            <person name="de Bono B."/>
            <person name="Della Gatta G."/>
            <person name="di Bernardo D."/>
            <person name="Down T."/>
            <person name="Engstrom P."/>
            <person name="Fagiolini M."/>
            <person name="Faulkner G."/>
            <person name="Fletcher C.F."/>
            <person name="Fukushima T."/>
            <person name="Furuno M."/>
            <person name="Futaki S."/>
            <person name="Gariboldi M."/>
            <person name="Georgii-Hemming P."/>
            <person name="Gingeras T.R."/>
            <person name="Gojobori T."/>
            <person name="Green R.E."/>
            <person name="Gustincich S."/>
            <person name="Harbers M."/>
            <person name="Hayashi Y."/>
            <person name="Hensch T.K."/>
            <person name="Hirokawa N."/>
            <person name="Hill D."/>
            <person name="Huminiecki L."/>
            <person name="Iacono M."/>
            <person name="Ikeo K."/>
            <person name="Iwama A."/>
            <person name="Ishikawa T."/>
            <person name="Jakt M."/>
            <person name="Kanapin A."/>
            <person name="Katoh M."/>
            <person name="Kawasawa Y."/>
            <person name="Kelso J."/>
            <person name="Kitamura H."/>
            <person name="Kitano H."/>
            <person name="Kollias G."/>
            <person name="Krishnan S.P."/>
            <person name="Kruger A."/>
            <person name="Kummerfeld S.K."/>
            <person name="Kurochkin I.V."/>
            <person name="Lareau L.F."/>
            <person name="Lazarevic D."/>
            <person name="Lipovich L."/>
            <person name="Liu J."/>
            <person name="Liuni S."/>
            <person name="McWilliam S."/>
            <person name="Madan Babu M."/>
            <person name="Madera M."/>
            <person name="Marchionni L."/>
            <person name="Matsuda H."/>
            <person name="Matsuzawa S."/>
            <person name="Miki H."/>
            <person name="Mignone F."/>
            <person name="Miyake S."/>
            <person name="Morris K."/>
            <person name="Mottagui-Tabar S."/>
            <person name="Mulder N."/>
            <person name="Nakano N."/>
            <person name="Nakauchi H."/>
            <person name="Ng P."/>
            <person name="Nilsson R."/>
            <person name="Nishiguchi S."/>
            <person name="Nishikawa S."/>
            <person name="Nori F."/>
            <person name="Ohara O."/>
            <person name="Okazaki Y."/>
            <person name="Orlando V."/>
            <person name="Pang K.C."/>
            <person name="Pavan W.J."/>
            <person name="Pavesi G."/>
            <person name="Pesole G."/>
            <person name="Petrovsky N."/>
            <person name="Piazza S."/>
            <person name="Reed J."/>
            <person name="Reid J.F."/>
            <person name="Ring B.Z."/>
            <person name="Ringwald M."/>
            <person name="Rost B."/>
            <person name="Ruan Y."/>
            <person name="Salzberg S.L."/>
            <person name="Sandelin A."/>
            <person name="Schneider C."/>
            <person name="Schoenbach C."/>
            <person name="Sekiguchi K."/>
            <person name="Semple C.A."/>
            <person name="Seno S."/>
            <person name="Sessa L."/>
            <person name="Sheng Y."/>
            <person name="Shibata Y."/>
            <person name="Shimada H."/>
            <person name="Shimada K."/>
            <person name="Silva D."/>
            <person name="Sinclair B."/>
            <person name="Sperling S."/>
            <person name="Stupka E."/>
            <person name="Sugiura K."/>
            <person name="Sultana R."/>
            <person name="Takenaka Y."/>
            <person name="Taki K."/>
            <person name="Tammoja K."/>
            <person name="Tan S.L."/>
            <person name="Tang S."/>
            <person name="Taylor M.S."/>
            <person name="Tegner J."/>
            <person name="Teichmann S.A."/>
            <person name="Ueda H.R."/>
            <person name="van Nimwegen E."/>
            <person name="Verardo R."/>
            <person name="Wei C.L."/>
            <person name="Yagi K."/>
            <person name="Yamanishi H."/>
            <person name="Zabarovsky E."/>
            <person name="Zhu S."/>
            <person name="Zimmer A."/>
            <person name="Hide W."/>
            <person name="Bult C."/>
            <person name="Grimmond S.M."/>
            <person name="Teasdale R.D."/>
            <person name="Liu E.T."/>
            <person name="Brusic V."/>
            <person name="Quackenbush J."/>
            <person name="Wahlestedt C."/>
            <person name="Mattick J.S."/>
            <person name="Hume D.A."/>
            <person name="Kai C."/>
            <person name="Sasaki D."/>
            <person name="Tomaru Y."/>
            <person name="Fukuda S."/>
            <person name="Kanamori-Katayama M."/>
            <person name="Suzuki M."/>
            <person name="Aoki J."/>
            <person name="Arakawa T."/>
            <person name="Iida J."/>
            <person name="Imamura K."/>
            <person name="Itoh M."/>
            <person name="Kato T."/>
            <person name="Kawaji H."/>
            <person name="Kawagashira N."/>
            <person name="Kawashima T."/>
            <person name="Kojima M."/>
            <person name="Kondo S."/>
            <person name="Konno H."/>
            <person name="Nakano K."/>
            <person name="Ninomiya N."/>
            <person name="Nishio T."/>
            <person name="Okada M."/>
            <person name="Plessy C."/>
            <person name="Shibata K."/>
            <person name="Shiraki T."/>
            <person name="Suzuki S."/>
            <person name="Tagami M."/>
            <person name="Waki K."/>
            <person name="Watahiki A."/>
            <person name="Okamura-Oho Y."/>
            <person name="Suzuki H."/>
            <person name="Kawai J."/>
            <person name="Hayashizaki Y."/>
        </authorList>
    </citation>
    <scope>NUCLEOTIDE SEQUENCE [LARGE SCALE MRNA] (ISOFORMS 1 AND 3)</scope>
    <source>
        <strain>C57BL/6J</strain>
        <tissue>Cerebellum</tissue>
        <tissue>Olfactory bulb</tissue>
        <tissue>Spinal cord</tissue>
    </source>
</reference>
<reference key="2">
    <citation type="journal article" date="2004" name="Genome Res.">
        <title>The status, quality, and expansion of the NIH full-length cDNA project: the Mammalian Gene Collection (MGC).</title>
        <authorList>
            <consortium name="The MGC Project Team"/>
        </authorList>
    </citation>
    <scope>NUCLEOTIDE SEQUENCE [LARGE SCALE MRNA] (ISOFORMS 1 AND 2)</scope>
    <source>
        <strain>C57BL/6J</strain>
        <tissue>Brain</tissue>
    </source>
</reference>
<reference key="3">
    <citation type="journal article" date="2012" name="J. Neurochem.">
        <title>Nesca, a novel neuronal adapter protein, links the molecular motor kinesin with the pre-synaptic membrane protein, syntaxin-1, in hippocampal neurons.</title>
        <authorList>
            <person name="Macdonald J.I."/>
            <person name="Dietrich A."/>
            <person name="Gamble S."/>
            <person name="Hryciw T."/>
            <person name="Grant R.I."/>
            <person name="Meakin S.O."/>
        </authorList>
    </citation>
    <scope>FUNCTION</scope>
    <scope>SUBCELLULAR LOCATION</scope>
    <scope>INTERACTION WITH ACTIN</scope>
    <scope>TUBB3; STX1A; KIF5B AND KLC1 TISSUE SPECIFICITY</scope>
    <scope>DEVELOPMENTAL STAGE</scope>
</reference>